<evidence type="ECO:0000255" key="1">
    <source>
        <dbReference type="PROSITE-ProRule" id="PRU00532"/>
    </source>
</evidence>
<evidence type="ECO:0000269" key="2">
    <source>
    </source>
</evidence>
<evidence type="ECO:0000305" key="3"/>
<evidence type="ECO:0000312" key="4">
    <source>
        <dbReference type="EMBL" id="CCP46242.1"/>
    </source>
</evidence>
<comment type="function">
    <text evidence="2">N-alpha-acetyltransferase that specifically mediates the acetylation of N-terminal residues. Able to mediate acetylation of a wide variety of N-terminal residues, with preference for hydrophobic N-termini. Acetylates GroS/GroES and GroEL1. Able to acetylate the ribosomal protein bS18, but it is unclear whether it acetylates its N-terminal alanine residue.</text>
</comment>
<comment type="catalytic activity">
    <reaction evidence="2">
        <text>N-terminal L-methionyl-L-alanyl-[protein] + acetyl-CoA = N-terminal N(alpha)-acetyl-L-methionyl-L-alanyl-[protein] + CoA + H(+)</text>
        <dbReference type="Rhea" id="RHEA:50564"/>
        <dbReference type="Rhea" id="RHEA-COMP:12726"/>
        <dbReference type="Rhea" id="RHEA-COMP:12727"/>
        <dbReference type="ChEBI" id="CHEBI:15378"/>
        <dbReference type="ChEBI" id="CHEBI:57287"/>
        <dbReference type="ChEBI" id="CHEBI:57288"/>
        <dbReference type="ChEBI" id="CHEBI:133398"/>
        <dbReference type="ChEBI" id="CHEBI:133399"/>
        <dbReference type="EC" id="2.3.1.258"/>
    </reaction>
</comment>
<comment type="catalytic activity">
    <reaction evidence="2">
        <text>N-terminal L-methionyl-L-seryl-[protein] + acetyl-CoA = N-terminal N(alpha)-acetyl-L-methionyl-L-seryl-[protein] + CoA + H(+)</text>
        <dbReference type="Rhea" id="RHEA:50568"/>
        <dbReference type="Rhea" id="RHEA-COMP:12728"/>
        <dbReference type="Rhea" id="RHEA-COMP:12729"/>
        <dbReference type="ChEBI" id="CHEBI:15378"/>
        <dbReference type="ChEBI" id="CHEBI:57287"/>
        <dbReference type="ChEBI" id="CHEBI:57288"/>
        <dbReference type="ChEBI" id="CHEBI:133400"/>
        <dbReference type="ChEBI" id="CHEBI:133401"/>
        <dbReference type="EC" id="2.3.1.258"/>
    </reaction>
</comment>
<comment type="catalytic activity">
    <reaction evidence="2">
        <text>N-terminal L-methionyl-L-valyl-[protein] + acetyl-CoA = N-terminal N(alpha)-acetyl-L-methionyl-L-valyl-[protein] + CoA + H(+)</text>
        <dbReference type="Rhea" id="RHEA:50572"/>
        <dbReference type="Rhea" id="RHEA-COMP:12730"/>
        <dbReference type="Rhea" id="RHEA-COMP:12731"/>
        <dbReference type="ChEBI" id="CHEBI:15378"/>
        <dbReference type="ChEBI" id="CHEBI:57287"/>
        <dbReference type="ChEBI" id="CHEBI:57288"/>
        <dbReference type="ChEBI" id="CHEBI:133402"/>
        <dbReference type="ChEBI" id="CHEBI:133403"/>
        <dbReference type="EC" id="2.3.1.258"/>
    </reaction>
</comment>
<comment type="catalytic activity">
    <reaction evidence="2">
        <text>N-terminal L-methionyl-L-threonyl-[protein] + acetyl-CoA = N-terminal N(alpha)-acetyl-L-methionyl-L-threonyl-[protein] + CoA + H(+)</text>
        <dbReference type="Rhea" id="RHEA:50576"/>
        <dbReference type="Rhea" id="RHEA-COMP:12732"/>
        <dbReference type="Rhea" id="RHEA-COMP:12733"/>
        <dbReference type="ChEBI" id="CHEBI:15378"/>
        <dbReference type="ChEBI" id="CHEBI:57287"/>
        <dbReference type="ChEBI" id="CHEBI:57288"/>
        <dbReference type="ChEBI" id="CHEBI:133404"/>
        <dbReference type="ChEBI" id="CHEBI:133405"/>
        <dbReference type="EC" id="2.3.1.258"/>
    </reaction>
</comment>
<comment type="catalytic activity">
    <reaction evidence="2">
        <text>N-terminal L-methionyl-L-lysyl-[protein] + acetyl-CoA = N-terminal N(alpha)-acetyl-L-methionyl-L-lysyl-[protein] + CoA + H(+)</text>
        <dbReference type="Rhea" id="RHEA:50580"/>
        <dbReference type="Rhea" id="RHEA-COMP:12734"/>
        <dbReference type="Rhea" id="RHEA-COMP:12735"/>
        <dbReference type="ChEBI" id="CHEBI:15378"/>
        <dbReference type="ChEBI" id="CHEBI:57287"/>
        <dbReference type="ChEBI" id="CHEBI:57288"/>
        <dbReference type="ChEBI" id="CHEBI:133406"/>
        <dbReference type="ChEBI" id="CHEBI:133407"/>
        <dbReference type="EC" id="2.3.1.258"/>
    </reaction>
</comment>
<comment type="catalytic activity">
    <reaction evidence="2">
        <text>N-terminal L-methionyl-L-leucyl-[protein] + acetyl-CoA = N-terminal N(alpha)-acetyl-L-methionyl-L-leucyl-[protein] + CoA + H(+)</text>
        <dbReference type="Rhea" id="RHEA:50520"/>
        <dbReference type="Rhea" id="RHEA-COMP:12711"/>
        <dbReference type="Rhea" id="RHEA-COMP:12712"/>
        <dbReference type="ChEBI" id="CHEBI:15378"/>
        <dbReference type="ChEBI" id="CHEBI:57287"/>
        <dbReference type="ChEBI" id="CHEBI:57288"/>
        <dbReference type="ChEBI" id="CHEBI:133377"/>
        <dbReference type="ChEBI" id="CHEBI:133378"/>
        <dbReference type="EC" id="2.3.1.258"/>
    </reaction>
</comment>
<comment type="catalytic activity">
    <reaction evidence="2">
        <text>N-terminal L-methionyl-L-phenylalanyl-[protein] + acetyl-CoA = N-terminal N(alpha)-acetyl-L-methionyl-L-phenylalanyl-[protein] + CoA + H(+)</text>
        <dbReference type="Rhea" id="RHEA:50528"/>
        <dbReference type="Rhea" id="RHEA-COMP:12715"/>
        <dbReference type="Rhea" id="RHEA-COMP:12716"/>
        <dbReference type="ChEBI" id="CHEBI:15378"/>
        <dbReference type="ChEBI" id="CHEBI:57287"/>
        <dbReference type="ChEBI" id="CHEBI:57288"/>
        <dbReference type="ChEBI" id="CHEBI:133382"/>
        <dbReference type="ChEBI" id="CHEBI:133383"/>
        <dbReference type="EC" id="2.3.1.258"/>
    </reaction>
</comment>
<comment type="catalytic activity">
    <reaction evidence="2">
        <text>N-terminal L-methionyl-L-tyrosyl-[protein] + acetyl-CoA = N-terminal N(alpha)-acetyl-L-methionyl-L-tyrosyl-[protein] + CoA + H(+)</text>
        <dbReference type="Rhea" id="RHEA:50532"/>
        <dbReference type="Rhea" id="RHEA-COMP:12717"/>
        <dbReference type="Rhea" id="RHEA-COMP:12718"/>
        <dbReference type="ChEBI" id="CHEBI:15378"/>
        <dbReference type="ChEBI" id="CHEBI:57287"/>
        <dbReference type="ChEBI" id="CHEBI:57288"/>
        <dbReference type="ChEBI" id="CHEBI:133384"/>
        <dbReference type="ChEBI" id="CHEBI:133385"/>
        <dbReference type="EC" id="2.3.1.258"/>
    </reaction>
</comment>
<comment type="catalytic activity">
    <reaction evidence="2">
        <text>N-terminal glycyl-[protein] + acetyl-CoA = N-terminal N(alpha)-acetylglycyl-[protein] + CoA + H(+)</text>
        <dbReference type="Rhea" id="RHEA:50496"/>
        <dbReference type="Rhea" id="RHEA-COMP:12666"/>
        <dbReference type="Rhea" id="RHEA-COMP:12700"/>
        <dbReference type="ChEBI" id="CHEBI:15378"/>
        <dbReference type="ChEBI" id="CHEBI:57287"/>
        <dbReference type="ChEBI" id="CHEBI:57288"/>
        <dbReference type="ChEBI" id="CHEBI:64723"/>
        <dbReference type="ChEBI" id="CHEBI:133369"/>
        <dbReference type="EC" id="2.3.1.255"/>
    </reaction>
</comment>
<comment type="catalytic activity">
    <reaction evidence="2">
        <text>N-terminal L-alanyl-[protein] + acetyl-CoA = N-terminal N(alpha)-acetyl-L-alanyl-[protein] + CoA + H(+)</text>
        <dbReference type="Rhea" id="RHEA:50500"/>
        <dbReference type="Rhea" id="RHEA-COMP:12701"/>
        <dbReference type="Rhea" id="RHEA-COMP:12702"/>
        <dbReference type="ChEBI" id="CHEBI:15378"/>
        <dbReference type="ChEBI" id="CHEBI:57287"/>
        <dbReference type="ChEBI" id="CHEBI:57288"/>
        <dbReference type="ChEBI" id="CHEBI:64718"/>
        <dbReference type="ChEBI" id="CHEBI:83683"/>
        <dbReference type="EC" id="2.3.1.255"/>
    </reaction>
</comment>
<comment type="catalytic activity">
    <reaction evidence="2">
        <text>N-terminal L-seryl-[protein] + acetyl-CoA = N-terminal N(alpha)-acetyl-L-seryl-[protein] + CoA + H(+)</text>
        <dbReference type="Rhea" id="RHEA:50504"/>
        <dbReference type="Rhea" id="RHEA-COMP:12703"/>
        <dbReference type="Rhea" id="RHEA-COMP:12704"/>
        <dbReference type="ChEBI" id="CHEBI:15378"/>
        <dbReference type="ChEBI" id="CHEBI:57287"/>
        <dbReference type="ChEBI" id="CHEBI:57288"/>
        <dbReference type="ChEBI" id="CHEBI:64738"/>
        <dbReference type="ChEBI" id="CHEBI:83690"/>
        <dbReference type="EC" id="2.3.1.255"/>
    </reaction>
</comment>
<comment type="catalytic activity">
    <reaction evidence="2">
        <text>N-terminal L-valyl-[protein] + acetyl-CoA = N-terminal N(alpha)-acetyl-L-valyl-[protein] + CoA + H(+)</text>
        <dbReference type="Rhea" id="RHEA:50508"/>
        <dbReference type="Rhea" id="RHEA-COMP:12705"/>
        <dbReference type="Rhea" id="RHEA-COMP:12706"/>
        <dbReference type="ChEBI" id="CHEBI:15378"/>
        <dbReference type="ChEBI" id="CHEBI:57287"/>
        <dbReference type="ChEBI" id="CHEBI:57288"/>
        <dbReference type="ChEBI" id="CHEBI:64741"/>
        <dbReference type="ChEBI" id="CHEBI:133371"/>
        <dbReference type="EC" id="2.3.1.255"/>
    </reaction>
</comment>
<comment type="catalytic activity">
    <reaction evidence="2">
        <text>N-terminal L-cysteinyl-[protein] + acetyl-CoA = N-terminal N(alpha)-acetyl-L-cysteinyl-[protein] + CoA + H(+)</text>
        <dbReference type="Rhea" id="RHEA:50512"/>
        <dbReference type="Rhea" id="RHEA-COMP:12707"/>
        <dbReference type="Rhea" id="RHEA-COMP:12708"/>
        <dbReference type="ChEBI" id="CHEBI:15378"/>
        <dbReference type="ChEBI" id="CHEBI:57287"/>
        <dbReference type="ChEBI" id="CHEBI:57288"/>
        <dbReference type="ChEBI" id="CHEBI:65250"/>
        <dbReference type="ChEBI" id="CHEBI:133372"/>
        <dbReference type="EC" id="2.3.1.255"/>
    </reaction>
</comment>
<comment type="catalytic activity">
    <reaction evidence="2">
        <text>N-terminal L-threonyl-[protein] + acetyl-CoA = N-terminal N(alpha)-acetyl-L-threonyl-[protein] + CoA + H(+)</text>
        <dbReference type="Rhea" id="RHEA:50516"/>
        <dbReference type="Rhea" id="RHEA-COMP:12709"/>
        <dbReference type="Rhea" id="RHEA-COMP:12710"/>
        <dbReference type="ChEBI" id="CHEBI:15378"/>
        <dbReference type="ChEBI" id="CHEBI:57287"/>
        <dbReference type="ChEBI" id="CHEBI:57288"/>
        <dbReference type="ChEBI" id="CHEBI:64739"/>
        <dbReference type="ChEBI" id="CHEBI:133375"/>
        <dbReference type="EC" id="2.3.1.255"/>
    </reaction>
</comment>
<comment type="subunit">
    <text evidence="2">Monomer (PubMed:27353550). Interacts with TsaD (PubMed:27353550). Interacts with GroS/GroES (PubMed:27353550).</text>
</comment>
<comment type="similarity">
    <text>Belongs to the acetyltransferase family. RimI subfamily.</text>
</comment>
<sequence>MTADTEPVTIGALTRADAQRCAELEAQLFVGDDPWPPAAFNRELASPHNHYVGARSGGTLVGYAGISRLGRTPPFEYEVHTIGVDPAYQGRGIGRRLLRELLDFARGGVVYLEVRTDNDAALALYRSVGFQRVGLRRRYYRVSGADAYTMRRDSGDPS</sequence>
<dbReference type="EC" id="2.3.1.255" evidence="2"/>
<dbReference type="EC" id="2.3.1.258" evidence="2"/>
<dbReference type="EMBL" id="AL123456">
    <property type="protein sequence ID" value="CCP46242.1"/>
    <property type="molecule type" value="Genomic_DNA"/>
</dbReference>
<dbReference type="RefSeq" id="NP_217937.1">
    <property type="nucleotide sequence ID" value="NC_000962.3"/>
</dbReference>
<dbReference type="RefSeq" id="WP_003418034.1">
    <property type="nucleotide sequence ID" value="NZ_NVQJ01000027.1"/>
</dbReference>
<dbReference type="SMR" id="I6YG32"/>
<dbReference type="FunCoup" id="I6YG32">
    <property type="interactions" value="137"/>
</dbReference>
<dbReference type="STRING" id="83332.Rv3420c"/>
<dbReference type="PaxDb" id="83332-Rv3420c"/>
<dbReference type="DNASU" id="887555"/>
<dbReference type="GeneID" id="45427416"/>
<dbReference type="GeneID" id="887555"/>
<dbReference type="KEGG" id="mtu:Rv3420c"/>
<dbReference type="KEGG" id="mtv:RVBD_3420c"/>
<dbReference type="PATRIC" id="fig|83332.111.peg.3810"/>
<dbReference type="TubercuList" id="Rv3420c"/>
<dbReference type="eggNOG" id="COG0456">
    <property type="taxonomic scope" value="Bacteria"/>
</dbReference>
<dbReference type="HOGENOM" id="CLU_013985_23_3_11"/>
<dbReference type="InParanoid" id="I6YG32"/>
<dbReference type="OrthoDB" id="529907at2"/>
<dbReference type="PhylomeDB" id="I6YG32"/>
<dbReference type="BRENDA" id="2.3.1.255">
    <property type="organism ID" value="3445"/>
</dbReference>
<dbReference type="BRENDA" id="2.3.1.256">
    <property type="organism ID" value="3445"/>
</dbReference>
<dbReference type="BRENDA" id="2.3.1.258">
    <property type="organism ID" value="3445"/>
</dbReference>
<dbReference type="Proteomes" id="UP000001584">
    <property type="component" value="Chromosome"/>
</dbReference>
<dbReference type="GO" id="GO:0120518">
    <property type="term" value="F:protein N-terminal-methionine acetyltransferase activity"/>
    <property type="evidence" value="ECO:0007669"/>
    <property type="project" value="UniProtKB-EC"/>
</dbReference>
<dbReference type="GO" id="GO:1990189">
    <property type="term" value="F:protein N-terminal-serine acetyltransferase activity"/>
    <property type="evidence" value="ECO:0007669"/>
    <property type="project" value="RHEA"/>
</dbReference>
<dbReference type="GO" id="GO:0004596">
    <property type="term" value="F:protein-N-terminal amino-acid acetyltransferase activity"/>
    <property type="evidence" value="ECO:0000314"/>
    <property type="project" value="UniProtKB"/>
</dbReference>
<dbReference type="GO" id="GO:0008999">
    <property type="term" value="F:protein-N-terminal-alanine acetyltransferase activity"/>
    <property type="evidence" value="ECO:0000318"/>
    <property type="project" value="GO_Central"/>
</dbReference>
<dbReference type="GO" id="GO:0006474">
    <property type="term" value="P:N-terminal protein amino acid acetylation"/>
    <property type="evidence" value="ECO:0000314"/>
    <property type="project" value="UniProtKB"/>
</dbReference>
<dbReference type="CDD" id="cd04301">
    <property type="entry name" value="NAT_SF"/>
    <property type="match status" value="1"/>
</dbReference>
<dbReference type="Gene3D" id="3.40.630.30">
    <property type="match status" value="1"/>
</dbReference>
<dbReference type="InterPro" id="IPR006464">
    <property type="entry name" value="AcTrfase_RimI/Ard1"/>
</dbReference>
<dbReference type="InterPro" id="IPR016181">
    <property type="entry name" value="Acyl_CoA_acyltransferase"/>
</dbReference>
<dbReference type="InterPro" id="IPR050832">
    <property type="entry name" value="Bact_Acetyltransf"/>
</dbReference>
<dbReference type="InterPro" id="IPR000182">
    <property type="entry name" value="GNAT_dom"/>
</dbReference>
<dbReference type="NCBIfam" id="TIGR01575">
    <property type="entry name" value="rimI"/>
    <property type="match status" value="1"/>
</dbReference>
<dbReference type="PANTHER" id="PTHR43877">
    <property type="entry name" value="AMINOALKYLPHOSPHONATE N-ACETYLTRANSFERASE-RELATED-RELATED"/>
    <property type="match status" value="1"/>
</dbReference>
<dbReference type="Pfam" id="PF00583">
    <property type="entry name" value="Acetyltransf_1"/>
    <property type="match status" value="1"/>
</dbReference>
<dbReference type="SUPFAM" id="SSF55729">
    <property type="entry name" value="Acyl-CoA N-acyltransferases (Nat)"/>
    <property type="match status" value="1"/>
</dbReference>
<dbReference type="PROSITE" id="PS51186">
    <property type="entry name" value="GNAT"/>
    <property type="match status" value="1"/>
</dbReference>
<proteinExistence type="evidence at protein level"/>
<reference key="1">
    <citation type="journal article" date="1998" name="Nature">
        <title>Deciphering the biology of Mycobacterium tuberculosis from the complete genome sequence.</title>
        <authorList>
            <person name="Cole S.T."/>
            <person name="Brosch R."/>
            <person name="Parkhill J."/>
            <person name="Garnier T."/>
            <person name="Churcher C.M."/>
            <person name="Harris D.E."/>
            <person name="Gordon S.V."/>
            <person name="Eiglmeier K."/>
            <person name="Gas S."/>
            <person name="Barry C.E. III"/>
            <person name="Tekaia F."/>
            <person name="Badcock K."/>
            <person name="Basham D."/>
            <person name="Brown D."/>
            <person name="Chillingworth T."/>
            <person name="Connor R."/>
            <person name="Davies R.M."/>
            <person name="Devlin K."/>
            <person name="Feltwell T."/>
            <person name="Gentles S."/>
            <person name="Hamlin N."/>
            <person name="Holroyd S."/>
            <person name="Hornsby T."/>
            <person name="Jagels K."/>
            <person name="Krogh A."/>
            <person name="McLean J."/>
            <person name="Moule S."/>
            <person name="Murphy L.D."/>
            <person name="Oliver S."/>
            <person name="Osborne J."/>
            <person name="Quail M.A."/>
            <person name="Rajandream M.A."/>
            <person name="Rogers J."/>
            <person name="Rutter S."/>
            <person name="Seeger K."/>
            <person name="Skelton S."/>
            <person name="Squares S."/>
            <person name="Squares R."/>
            <person name="Sulston J.E."/>
            <person name="Taylor K."/>
            <person name="Whitehead S."/>
            <person name="Barrell B.G."/>
        </authorList>
    </citation>
    <scope>NUCLEOTIDE SEQUENCE [LARGE SCALE GENOMIC DNA]</scope>
    <source>
        <strain>ATCC 25618 / H37Rv</strain>
    </source>
</reference>
<reference key="2">
    <citation type="journal article" date="2016" name="Sci. Rep.">
        <title>Biochemical evidence for relaxed substrate specificity of Nalpha-acetyltransferase (Rv3420c/rimI) of Mycobacterium tuberculosis.</title>
        <authorList>
            <person name="Pathak D."/>
            <person name="Bhat A.H."/>
            <person name="Sapehia V."/>
            <person name="Rai J."/>
            <person name="Rao A."/>
        </authorList>
    </citation>
    <scope>FUNCTION</scope>
    <scope>CATALYTIC ACTIVITY</scope>
    <scope>SUBUNIT</scope>
    <scope>INTERACTION WITH TSAD AND GROS</scope>
</reference>
<feature type="chain" id="PRO_0000438820" description="N-alpha-acetyltransferase RimI">
    <location>
        <begin position="1"/>
        <end position="158"/>
    </location>
</feature>
<feature type="domain" description="N-acetyltransferase" evidence="1">
    <location>
        <begin position="8"/>
        <end position="155"/>
    </location>
</feature>
<name>RIMI_MYCTU</name>
<accession>I6YG32</accession>
<protein>
    <recommendedName>
        <fullName evidence="3">N-alpha-acetyltransferase RimI</fullName>
        <ecNumber evidence="2">2.3.1.255</ecNumber>
        <ecNumber evidence="2">2.3.1.258</ecNumber>
    </recommendedName>
</protein>
<gene>
    <name evidence="4" type="primary">rimI</name>
    <name evidence="4" type="ordered locus">Rv3420c</name>
</gene>
<keyword id="KW-0012">Acyltransferase</keyword>
<keyword id="KW-1185">Reference proteome</keyword>
<keyword id="KW-0808">Transferase</keyword>
<organism>
    <name type="scientific">Mycobacterium tuberculosis (strain ATCC 25618 / H37Rv)</name>
    <dbReference type="NCBI Taxonomy" id="83332"/>
    <lineage>
        <taxon>Bacteria</taxon>
        <taxon>Bacillati</taxon>
        <taxon>Actinomycetota</taxon>
        <taxon>Actinomycetes</taxon>
        <taxon>Mycobacteriales</taxon>
        <taxon>Mycobacteriaceae</taxon>
        <taxon>Mycobacterium</taxon>
        <taxon>Mycobacterium tuberculosis complex</taxon>
    </lineage>
</organism>